<proteinExistence type="evidence at protein level"/>
<comment type="function">
    <text evidence="3 4">F420H(2)-dependent reductase able to catalyze the reduction of biliverdin-IXalpha to bilirubin-IXalpha in vitro. However, kinetic parameters show that it is less efficient than the biliverdin reductase Rv2074 and suggest biliverdin-IXalpha is unlikely to be the native substrate of Rv1155, which probably catalyzes the reduction of an alternative molecule in vivo (PubMed:27364382). Binds coenzyme F420, but does not bind FMN or other flavins (PubMed:25644473). Cannot use pyridoxine 5'-phosphate, pyridoxamine 5'-phosphate, pyridoxal 5'-phosphate (PLP), the anti-tuberculosis drug PA-824 or aflatoxin analogs as substrates (PubMed:25644473).</text>
</comment>
<comment type="biophysicochemical properties">
    <kinetics>
        <KM evidence="4">82.8 uM for biliverdin</KM>
        <text evidence="4">kcat is 0.024 sec(-1) for the reduction of biliverdin.</text>
    </kinetics>
</comment>
<comment type="subunit">
    <text evidence="1 2 3">Homodimer.</text>
</comment>
<comment type="similarity">
    <text evidence="5">Belongs to the F420H(2)-dependent biliverdin reductase family.</text>
</comment>
<comment type="caution">
    <text evidence="6">Was originally thought to be an FMN-dependent pyridoxine 5'-phosphate oxidase.</text>
</comment>
<comment type="caution">
    <text evidence="7">FMN and PLP are seen in the crystal structures published in PubMed:16239726, however, the enzyme does not bind these compounds in vitro, and the complexes obtained in the crystal structures may be the result of weak FMN/PLP binding that is stabilized by the crystal lattice.</text>
</comment>
<keyword id="KW-0002">3D-structure</keyword>
<keyword id="KW-0560">Oxidoreductase</keyword>
<keyword id="KW-1185">Reference proteome</keyword>
<protein>
    <recommendedName>
        <fullName evidence="8">F420H(2)-dependent reductase Rv1155</fullName>
        <ecNumber evidence="4">1.-.-.-</ecNumber>
    </recommendedName>
</protein>
<organism>
    <name type="scientific">Mycobacterium tuberculosis (strain ATCC 25618 / H37Rv)</name>
    <dbReference type="NCBI Taxonomy" id="83332"/>
    <lineage>
        <taxon>Bacteria</taxon>
        <taxon>Bacillati</taxon>
        <taxon>Actinomycetota</taxon>
        <taxon>Actinomycetes</taxon>
        <taxon>Mycobacteriales</taxon>
        <taxon>Mycobacteriaceae</taxon>
        <taxon>Mycobacterium</taxon>
        <taxon>Mycobacterium tuberculosis complex</taxon>
    </lineage>
</organism>
<evidence type="ECO:0000269" key="1">
    <source>
    </source>
</evidence>
<evidence type="ECO:0000269" key="2">
    <source>
    </source>
</evidence>
<evidence type="ECO:0000269" key="3">
    <source>
    </source>
</evidence>
<evidence type="ECO:0000269" key="4">
    <source>
    </source>
</evidence>
<evidence type="ECO:0000305" key="5"/>
<evidence type="ECO:0000305" key="6">
    <source>
    </source>
</evidence>
<evidence type="ECO:0000305" key="7">
    <source>
    </source>
</evidence>
<evidence type="ECO:0000305" key="8">
    <source>
    </source>
</evidence>
<evidence type="ECO:0007829" key="9">
    <source>
        <dbReference type="PDB" id="1W9A"/>
    </source>
</evidence>
<evidence type="ECO:0007829" key="10">
    <source>
        <dbReference type="PDB" id="2AQ6"/>
    </source>
</evidence>
<feature type="chain" id="PRO_0000399901" description="F420H(2)-dependent reductase Rv1155">
    <location>
        <begin position="1"/>
        <end position="147"/>
    </location>
</feature>
<feature type="binding site" description="in other chain" evidence="3">
    <location>
        <position position="32"/>
    </location>
    <ligand>
        <name>coenzyme F420-(gamma-Glu)n</name>
        <dbReference type="ChEBI" id="CHEBI:133980"/>
        <note>ligand shared between dimeric partners</note>
    </ligand>
</feature>
<feature type="binding site" description="in other chain" evidence="3">
    <location>
        <position position="37"/>
    </location>
    <ligand>
        <name>coenzyme F420-(gamma-Glu)n</name>
        <dbReference type="ChEBI" id="CHEBI:133980"/>
        <note>ligand shared between dimeric partners</note>
    </ligand>
</feature>
<feature type="binding site" description="in other chain" evidence="3">
    <location>
        <position position="50"/>
    </location>
    <ligand>
        <name>coenzyme F420-(gamma-Glu)n</name>
        <dbReference type="ChEBI" id="CHEBI:133980"/>
        <note>ligand shared between dimeric partners</note>
    </ligand>
</feature>
<feature type="binding site" description="in other chain" evidence="3">
    <location>
        <begin position="56"/>
        <end position="60"/>
    </location>
    <ligand>
        <name>coenzyme F420-(gamma-Glu)n</name>
        <dbReference type="ChEBI" id="CHEBI:133980"/>
        <note>ligand shared between dimeric partners</note>
    </ligand>
</feature>
<feature type="binding site" evidence="3">
    <location>
        <begin position="77"/>
        <end position="79"/>
    </location>
    <ligand>
        <name>coenzyme F420-(gamma-Glu)n</name>
        <dbReference type="ChEBI" id="CHEBI:133980"/>
        <note>ligand shared between dimeric partners</note>
    </ligand>
</feature>
<feature type="binding site" evidence="3">
    <location>
        <position position="138"/>
    </location>
    <ligand>
        <name>coenzyme F420-(gamma-Glu)n</name>
        <dbReference type="ChEBI" id="CHEBI:133980"/>
        <note>ligand shared between dimeric partners</note>
    </ligand>
</feature>
<feature type="helix" evidence="10">
    <location>
        <begin position="6"/>
        <end position="15"/>
    </location>
</feature>
<feature type="strand" evidence="10">
    <location>
        <begin position="18"/>
        <end position="25"/>
    </location>
</feature>
<feature type="strand" evidence="10">
    <location>
        <begin position="31"/>
        <end position="37"/>
    </location>
</feature>
<feature type="strand" evidence="10">
    <location>
        <begin position="39"/>
        <end position="41"/>
    </location>
</feature>
<feature type="turn" evidence="10">
    <location>
        <begin position="42"/>
        <end position="45"/>
    </location>
</feature>
<feature type="strand" evidence="10">
    <location>
        <begin position="46"/>
        <end position="52"/>
    </location>
</feature>
<feature type="helix" evidence="10">
    <location>
        <begin position="56"/>
        <end position="63"/>
    </location>
</feature>
<feature type="strand" evidence="10">
    <location>
        <begin position="66"/>
        <end position="72"/>
    </location>
</feature>
<feature type="strand" evidence="9">
    <location>
        <begin position="74"/>
        <end position="77"/>
    </location>
</feature>
<feature type="strand" evidence="10">
    <location>
        <begin position="79"/>
        <end position="85"/>
    </location>
</feature>
<feature type="helix" evidence="10">
    <location>
        <begin position="98"/>
        <end position="110"/>
    </location>
</feature>
<feature type="helix" evidence="10">
    <location>
        <begin position="117"/>
        <end position="126"/>
    </location>
</feature>
<feature type="strand" evidence="10">
    <location>
        <begin position="129"/>
        <end position="135"/>
    </location>
</feature>
<feature type="strand" evidence="10">
    <location>
        <begin position="138"/>
        <end position="142"/>
    </location>
</feature>
<sequence>MARQVFDDKLLAVISGNSIGVLATIKHDGRPQLSNVQYHFDPRKLLIQVSIAEPRAKTRNLRRDPRASILVDADDGWSYAVAEGTAQLTPPAAAPDDDTVEALIALYRNIAGEHSDWDDYRQAMVTDRRVLLTLPISHVYGLPPGMR</sequence>
<dbReference type="EC" id="1.-.-.-" evidence="4"/>
<dbReference type="EMBL" id="AL123456">
    <property type="protein sequence ID" value="CCP43910.1"/>
    <property type="molecule type" value="Genomic_DNA"/>
</dbReference>
<dbReference type="PIR" id="D70555">
    <property type="entry name" value="D70555"/>
</dbReference>
<dbReference type="RefSeq" id="NP_215671.1">
    <property type="nucleotide sequence ID" value="NC_000962.3"/>
</dbReference>
<dbReference type="RefSeq" id="WP_003898745.1">
    <property type="nucleotide sequence ID" value="NZ_NVQJ01000025.1"/>
</dbReference>
<dbReference type="PDB" id="1W9A">
    <property type="method" value="X-ray"/>
    <property type="resolution" value="1.80 A"/>
    <property type="chains" value="A/B=1-147"/>
</dbReference>
<dbReference type="PDB" id="1XXO">
    <property type="method" value="X-ray"/>
    <property type="resolution" value="1.80 A"/>
    <property type="chains" value="A/B=1-147"/>
</dbReference>
<dbReference type="PDB" id="1Y30">
    <property type="method" value="X-ray"/>
    <property type="resolution" value="2.20 A"/>
    <property type="chains" value="A/B=1-147"/>
</dbReference>
<dbReference type="PDB" id="2AQ6">
    <property type="method" value="X-ray"/>
    <property type="resolution" value="1.70 A"/>
    <property type="chains" value="A/B=1-147"/>
</dbReference>
<dbReference type="PDB" id="4QVB">
    <property type="method" value="X-ray"/>
    <property type="resolution" value="2.30 A"/>
    <property type="chains" value="A/B=2-147"/>
</dbReference>
<dbReference type="PDBsum" id="1W9A"/>
<dbReference type="PDBsum" id="1XXO"/>
<dbReference type="PDBsum" id="1Y30"/>
<dbReference type="PDBsum" id="2AQ6"/>
<dbReference type="PDBsum" id="4QVB"/>
<dbReference type="SMR" id="O06553"/>
<dbReference type="STRING" id="83332.Rv1155"/>
<dbReference type="PaxDb" id="83332-Rv1155"/>
<dbReference type="DNASU" id="885604"/>
<dbReference type="GeneID" id="885604"/>
<dbReference type="KEGG" id="mtu:Rv1155"/>
<dbReference type="KEGG" id="mtv:RVBD_1155"/>
<dbReference type="TubercuList" id="Rv1155"/>
<dbReference type="eggNOG" id="COG3467">
    <property type="taxonomic scope" value="Bacteria"/>
</dbReference>
<dbReference type="InParanoid" id="O06553"/>
<dbReference type="OrthoDB" id="1094370at2"/>
<dbReference type="PhylomeDB" id="O06553"/>
<dbReference type="BRENDA" id="1.4.3.5">
    <property type="organism ID" value="3445"/>
</dbReference>
<dbReference type="EvolutionaryTrace" id="O06553"/>
<dbReference type="Proteomes" id="UP000001584">
    <property type="component" value="Chromosome"/>
</dbReference>
<dbReference type="GO" id="GO:0070967">
    <property type="term" value="F:coenzyme F420 binding"/>
    <property type="evidence" value="ECO:0000314"/>
    <property type="project" value="UniProtKB"/>
</dbReference>
<dbReference type="GO" id="GO:0010181">
    <property type="term" value="F:FMN binding"/>
    <property type="evidence" value="ECO:0000314"/>
    <property type="project" value="MTBBASE"/>
</dbReference>
<dbReference type="GO" id="GO:0016627">
    <property type="term" value="F:oxidoreductase activity, acting on the CH-CH group of donors"/>
    <property type="evidence" value="ECO:0000318"/>
    <property type="project" value="GO_Central"/>
</dbReference>
<dbReference type="GO" id="GO:0042803">
    <property type="term" value="F:protein homodimerization activity"/>
    <property type="evidence" value="ECO:0000314"/>
    <property type="project" value="UniProtKB"/>
</dbReference>
<dbReference type="GO" id="GO:0030170">
    <property type="term" value="F:pyridoxal phosphate binding"/>
    <property type="evidence" value="ECO:0000314"/>
    <property type="project" value="MTBBASE"/>
</dbReference>
<dbReference type="GO" id="GO:0042816">
    <property type="term" value="P:vitamin B6 metabolic process"/>
    <property type="evidence" value="ECO:0000314"/>
    <property type="project" value="MTBBASE"/>
</dbReference>
<dbReference type="FunFam" id="2.30.110.10:FF:000006">
    <property type="entry name" value="PPOX class F420-dependent enzyme"/>
    <property type="match status" value="1"/>
</dbReference>
<dbReference type="Gene3D" id="2.30.110.10">
    <property type="entry name" value="Electron Transport, Fmn-binding Protein, Chain A"/>
    <property type="match status" value="1"/>
</dbReference>
<dbReference type="InterPro" id="IPR019920">
    <property type="entry name" value="F420-binding_dom_put"/>
</dbReference>
<dbReference type="InterPro" id="IPR052019">
    <property type="entry name" value="F420H2_bilvrd_red/Heme_oxyg"/>
</dbReference>
<dbReference type="InterPro" id="IPR011576">
    <property type="entry name" value="Pyridox_Oxase_N"/>
</dbReference>
<dbReference type="InterPro" id="IPR012349">
    <property type="entry name" value="Split_barrel_FMN-bd"/>
</dbReference>
<dbReference type="NCBIfam" id="TIGR03618">
    <property type="entry name" value="Rv1155_F420"/>
    <property type="match status" value="1"/>
</dbReference>
<dbReference type="PANTHER" id="PTHR35176:SF2">
    <property type="entry name" value="F420H(2)-DEPENDENT REDUCTASE RV1155"/>
    <property type="match status" value="1"/>
</dbReference>
<dbReference type="PANTHER" id="PTHR35176">
    <property type="entry name" value="HEME OXYGENASE HI_0854-RELATED"/>
    <property type="match status" value="1"/>
</dbReference>
<dbReference type="Pfam" id="PF01243">
    <property type="entry name" value="PNPOx_N"/>
    <property type="match status" value="1"/>
</dbReference>
<dbReference type="SUPFAM" id="SSF50475">
    <property type="entry name" value="FMN-binding split barrel"/>
    <property type="match status" value="1"/>
</dbReference>
<name>F420R_MYCTU</name>
<gene>
    <name type="ordered locus">Rv1155</name>
</gene>
<accession>O06553</accession>
<accession>L0T7G6</accession>
<reference key="1">
    <citation type="journal article" date="1998" name="Nature">
        <title>Deciphering the biology of Mycobacterium tuberculosis from the complete genome sequence.</title>
        <authorList>
            <person name="Cole S.T."/>
            <person name="Brosch R."/>
            <person name="Parkhill J."/>
            <person name="Garnier T."/>
            <person name="Churcher C.M."/>
            <person name="Harris D.E."/>
            <person name="Gordon S.V."/>
            <person name="Eiglmeier K."/>
            <person name="Gas S."/>
            <person name="Barry C.E. III"/>
            <person name="Tekaia F."/>
            <person name="Badcock K."/>
            <person name="Basham D."/>
            <person name="Brown D."/>
            <person name="Chillingworth T."/>
            <person name="Connor R."/>
            <person name="Davies R.M."/>
            <person name="Devlin K."/>
            <person name="Feltwell T."/>
            <person name="Gentles S."/>
            <person name="Hamlin N."/>
            <person name="Holroyd S."/>
            <person name="Hornsby T."/>
            <person name="Jagels K."/>
            <person name="Krogh A."/>
            <person name="McLean J."/>
            <person name="Moule S."/>
            <person name="Murphy L.D."/>
            <person name="Oliver S."/>
            <person name="Osborne J."/>
            <person name="Quail M.A."/>
            <person name="Rajandream M.A."/>
            <person name="Rogers J."/>
            <person name="Rutter S."/>
            <person name="Seeger K."/>
            <person name="Skelton S."/>
            <person name="Squares S."/>
            <person name="Squares R."/>
            <person name="Sulston J.E."/>
            <person name="Taylor K."/>
            <person name="Whitehead S."/>
            <person name="Barrell B.G."/>
        </authorList>
    </citation>
    <scope>NUCLEOTIDE SEQUENCE [LARGE SCALE GENOMIC DNA]</scope>
    <source>
        <strain>ATCC 25618 / H37Rv</strain>
    </source>
</reference>
<reference key="2">
    <citation type="journal article" date="2011" name="Mol. Cell. Proteomics">
        <title>Proteogenomic analysis of Mycobacterium tuberculosis by high resolution mass spectrometry.</title>
        <authorList>
            <person name="Kelkar D.S."/>
            <person name="Kumar D."/>
            <person name="Kumar P."/>
            <person name="Balakrishnan L."/>
            <person name="Muthusamy B."/>
            <person name="Yadav A.K."/>
            <person name="Shrivastava P."/>
            <person name="Marimuthu A."/>
            <person name="Anand S."/>
            <person name="Sundaram H."/>
            <person name="Kingsbury R."/>
            <person name="Harsha H.C."/>
            <person name="Nair B."/>
            <person name="Prasad T.S."/>
            <person name="Chauhan D.S."/>
            <person name="Katoch K."/>
            <person name="Katoch V.M."/>
            <person name="Kumar P."/>
            <person name="Chaerkady R."/>
            <person name="Ramachandran S."/>
            <person name="Dash D."/>
            <person name="Pandey A."/>
        </authorList>
    </citation>
    <scope>IDENTIFICATION BY MASS SPECTROMETRY [LARGE SCALE ANALYSIS]</scope>
    <source>
        <strain>ATCC 25618 / H37Rv</strain>
    </source>
</reference>
<reference key="3">
    <citation type="journal article" date="2016" name="Protein Sci.">
        <title>Rv2074 is a novel F420H2-dependent biliverdin reductase in Mycobacterium tuberculosis.</title>
        <authorList>
            <person name="Ahmed F.H."/>
            <person name="Mohamed A.E."/>
            <person name="Carr P.D."/>
            <person name="Lee B.M."/>
            <person name="Condic-Jurkic K."/>
            <person name="O'Mara M.L."/>
            <person name="Jackson C.J."/>
        </authorList>
    </citation>
    <scope>FUNCTION</scope>
    <scope>CATALYTIC ACTIVITY</scope>
    <scope>BIOPHYSICOCHEMICAL PROPERTIES</scope>
</reference>
<reference key="4">
    <citation type="journal article" date="2005" name="Acta Crystallogr. D">
        <title>Structures of Mycobacterium tuberculosis pyridoxine 5'-phosphate oxidase and its complexes with flavin mononucleotide and pyridoxal 5'-phosphate.</title>
        <authorList>
            <person name="Biswal B.K."/>
            <person name="Cherney M.M."/>
            <person name="Wang M."/>
            <person name="Garen C."/>
            <person name="James M.N."/>
        </authorList>
    </citation>
    <scope>X-RAY CRYSTALLOGRAPHY (2.2 ANGSTROMS) IN COMPLEXES WITH FMN AND PYRIDOXAL PHOSPHATE</scope>
    <scope>SUBUNIT</scope>
</reference>
<reference key="5">
    <citation type="journal article" date="2005" name="FEBS Lett.">
        <title>Crystal structure of the conserved hypothetical protein Rv1155 from Mycobacterium tuberculosis.</title>
        <authorList>
            <person name="Canaan S."/>
            <person name="Sulzenbacher G."/>
            <person name="Roig-Zamboni V."/>
            <person name="Scappuccini-Calvo L."/>
            <person name="Frassinetti F."/>
            <person name="Maurin D."/>
            <person name="Cambillau C."/>
            <person name="Bourne Y."/>
        </authorList>
    </citation>
    <scope>X-RAY CRYSTALLOGRAPHY (1.8 ANGSTROMS)</scope>
    <scope>SUBUNIT</scope>
</reference>
<reference key="6">
    <citation type="journal article" date="2015" name="Protein Sci.">
        <title>Molecular insights into the binding of coenzyme F420 to the conserved protein Rv1155 from Mycobacterium tuberculosis.</title>
        <authorList>
            <person name="Mashalidis E.H."/>
            <person name="Gittis A.G."/>
            <person name="Tomczak A."/>
            <person name="Abell C."/>
            <person name="Barry C.E. III"/>
            <person name="Garboczi D.N."/>
        </authorList>
    </citation>
    <scope>X-RAY CRYSTALLOGRAPHY (2.30 ANGSTROMS) OF 2-147 IN COMPLEX WITH COENZYME F420-2</scope>
    <scope>FUNCTION</scope>
    <scope>COENZYME F420-BINDING</scope>
    <scope>SUBUNIT</scope>
</reference>